<evidence type="ECO:0000255" key="1">
    <source>
        <dbReference type="HAMAP-Rule" id="MF_00332"/>
    </source>
</evidence>
<evidence type="ECO:0000256" key="2">
    <source>
        <dbReference type="SAM" id="MobiDB-lite"/>
    </source>
</evidence>
<keyword id="KW-0067">ATP-binding</keyword>
<keyword id="KW-0143">Chaperone</keyword>
<keyword id="KW-0547">Nucleotide-binding</keyword>
<keyword id="KW-0597">Phosphoprotein</keyword>
<keyword id="KW-1185">Reference proteome</keyword>
<keyword id="KW-0346">Stress response</keyword>
<accession>Q8G6W1</accession>
<reference key="1">
    <citation type="journal article" date="2002" name="Proc. Natl. Acad. Sci. U.S.A.">
        <title>The genome sequence of Bifidobacterium longum reflects its adaptation to the human gastrointestinal tract.</title>
        <authorList>
            <person name="Schell M.A."/>
            <person name="Karmirantzou M."/>
            <person name="Snel B."/>
            <person name="Vilanova D."/>
            <person name="Berger B."/>
            <person name="Pessi G."/>
            <person name="Zwahlen M.-C."/>
            <person name="Desiere F."/>
            <person name="Bork P."/>
            <person name="Delley M."/>
            <person name="Pridmore R.D."/>
            <person name="Arigoni F."/>
        </authorList>
    </citation>
    <scope>NUCLEOTIDE SEQUENCE [LARGE SCALE GENOMIC DNA]</scope>
    <source>
        <strain>NCC 2705</strain>
    </source>
</reference>
<sequence length="626" mass="66943">MARAVGIDLGTTNSCIATLEGGEPTVIVNAEGARTTPSVVAFSKSGEILVGEVAKRQAVTNVDRTISSVKRHMGSDWTVDIDGKKWTPQEISAQILMKLKRDAEAYLGEPVTDAVITCPAYFNDAQRQATKDAGKIAGLNVLRIINEPTAAALAYGLEKGKEDERILVFDLGGGTFDVSLLEIGKDDDGFSTIQVQATNGDNHLGGDDWDQKIIDWLVSEVKNKYGVDLSKDKIALQRLKEAAEQAKKELSSSTSTSISMQYLAMTPDGTPVHLDETLTRAHFEEMTSDLLGRCRTPFNNVLHDAGISVSDIDHVVLVGGSTRMPAVKELVKELTGGKEANQSVNPDEVVAVGAAVQSGVIKGDRKDVLLIDVTPLSLGIETKGGIMTKLIDRNTAIPTKRSEVFSTAEDNQPSVLIQVYQGEREFARDNKPLGTFELTGIAPAPRGVPQIEVTFDIDANGIVHVSAKDKGTGKEQSMTITGGSGLPKDEIDRMVKEAEAHEAEDKKRKEDAETRNQAEAFAYSTEKLVNDNKDKLSDDIVKEVTDKVNALKEALKGDDTEKVKTAQTELMTAAQKIGQVLYAQQGAEGAAAGADGAGASAGSASGSDDDTVEAEVVDDDDDKDNK</sequence>
<protein>
    <recommendedName>
        <fullName evidence="1">Chaperone protein DnaK</fullName>
    </recommendedName>
    <alternativeName>
        <fullName evidence="1">HSP70</fullName>
    </alternativeName>
    <alternativeName>
        <fullName evidence="1">Heat shock 70 kDa protein</fullName>
    </alternativeName>
    <alternativeName>
        <fullName evidence="1">Heat shock protein 70</fullName>
    </alternativeName>
</protein>
<comment type="function">
    <text evidence="1">Acts as a chaperone.</text>
</comment>
<comment type="induction">
    <text evidence="1">By stress conditions e.g. heat shock.</text>
</comment>
<comment type="similarity">
    <text evidence="1">Belongs to the heat shock protein 70 family.</text>
</comment>
<organism>
    <name type="scientific">Bifidobacterium longum (strain NCC 2705)</name>
    <dbReference type="NCBI Taxonomy" id="206672"/>
    <lineage>
        <taxon>Bacteria</taxon>
        <taxon>Bacillati</taxon>
        <taxon>Actinomycetota</taxon>
        <taxon>Actinomycetes</taxon>
        <taxon>Bifidobacteriales</taxon>
        <taxon>Bifidobacteriaceae</taxon>
        <taxon>Bifidobacterium</taxon>
    </lineage>
</organism>
<name>DNAK_BIFLO</name>
<gene>
    <name evidence="1" type="primary">dnaK</name>
    <name type="ordered locus">BL0520</name>
</gene>
<proteinExistence type="inferred from homology"/>
<dbReference type="EMBL" id="AE014295">
    <property type="protein sequence ID" value="AAN24348.1"/>
    <property type="molecule type" value="Genomic_DNA"/>
</dbReference>
<dbReference type="RefSeq" id="NP_695712.1">
    <property type="nucleotide sequence ID" value="NC_004307.2"/>
</dbReference>
<dbReference type="RefSeq" id="WP_007051640.1">
    <property type="nucleotide sequence ID" value="NC_004307.2"/>
</dbReference>
<dbReference type="SMR" id="Q8G6W1"/>
<dbReference type="STRING" id="206672.BL0520"/>
<dbReference type="MoonProt" id="Q8G6W1"/>
<dbReference type="EnsemblBacteria" id="AAN24348">
    <property type="protein sequence ID" value="AAN24348"/>
    <property type="gene ID" value="BL0520"/>
</dbReference>
<dbReference type="GeneID" id="69577366"/>
<dbReference type="KEGG" id="blo:BL0520"/>
<dbReference type="PATRIC" id="fig|206672.9.peg.1259"/>
<dbReference type="HOGENOM" id="CLU_005965_2_4_11"/>
<dbReference type="OrthoDB" id="9766019at2"/>
<dbReference type="PhylomeDB" id="Q8G6W1"/>
<dbReference type="Proteomes" id="UP000000439">
    <property type="component" value="Chromosome"/>
</dbReference>
<dbReference type="GO" id="GO:0005524">
    <property type="term" value="F:ATP binding"/>
    <property type="evidence" value="ECO:0007669"/>
    <property type="project" value="UniProtKB-UniRule"/>
</dbReference>
<dbReference type="GO" id="GO:0140662">
    <property type="term" value="F:ATP-dependent protein folding chaperone"/>
    <property type="evidence" value="ECO:0007669"/>
    <property type="project" value="InterPro"/>
</dbReference>
<dbReference type="GO" id="GO:0051082">
    <property type="term" value="F:unfolded protein binding"/>
    <property type="evidence" value="ECO:0007669"/>
    <property type="project" value="InterPro"/>
</dbReference>
<dbReference type="CDD" id="cd10234">
    <property type="entry name" value="ASKHA_NBD_HSP70_DnaK-like"/>
    <property type="match status" value="1"/>
</dbReference>
<dbReference type="FunFam" id="2.60.34.10:FF:000014">
    <property type="entry name" value="Chaperone protein DnaK HSP70"/>
    <property type="match status" value="1"/>
</dbReference>
<dbReference type="FunFam" id="1.20.1270.10:FF:000001">
    <property type="entry name" value="Molecular chaperone DnaK"/>
    <property type="match status" value="1"/>
</dbReference>
<dbReference type="FunFam" id="3.30.420.40:FF:000071">
    <property type="entry name" value="Molecular chaperone DnaK"/>
    <property type="match status" value="1"/>
</dbReference>
<dbReference type="FunFam" id="3.90.640.10:FF:000003">
    <property type="entry name" value="Molecular chaperone DnaK"/>
    <property type="match status" value="1"/>
</dbReference>
<dbReference type="Gene3D" id="1.20.1270.10">
    <property type="match status" value="1"/>
</dbReference>
<dbReference type="Gene3D" id="3.30.420.40">
    <property type="match status" value="2"/>
</dbReference>
<dbReference type="Gene3D" id="3.90.640.10">
    <property type="entry name" value="Actin, Chain A, domain 4"/>
    <property type="match status" value="1"/>
</dbReference>
<dbReference type="Gene3D" id="2.60.34.10">
    <property type="entry name" value="Substrate Binding Domain Of DNAk, Chain A, domain 1"/>
    <property type="match status" value="1"/>
</dbReference>
<dbReference type="HAMAP" id="MF_00332">
    <property type="entry name" value="DnaK"/>
    <property type="match status" value="1"/>
</dbReference>
<dbReference type="InterPro" id="IPR043129">
    <property type="entry name" value="ATPase_NBD"/>
</dbReference>
<dbReference type="InterPro" id="IPR012725">
    <property type="entry name" value="Chaperone_DnaK"/>
</dbReference>
<dbReference type="InterPro" id="IPR018181">
    <property type="entry name" value="Heat_shock_70_CS"/>
</dbReference>
<dbReference type="InterPro" id="IPR029048">
    <property type="entry name" value="HSP70_C_sf"/>
</dbReference>
<dbReference type="InterPro" id="IPR029047">
    <property type="entry name" value="HSP70_peptide-bd_sf"/>
</dbReference>
<dbReference type="InterPro" id="IPR013126">
    <property type="entry name" value="Hsp_70_fam"/>
</dbReference>
<dbReference type="NCBIfam" id="NF001413">
    <property type="entry name" value="PRK00290.1"/>
    <property type="match status" value="1"/>
</dbReference>
<dbReference type="NCBIfam" id="TIGR02350">
    <property type="entry name" value="prok_dnaK"/>
    <property type="match status" value="1"/>
</dbReference>
<dbReference type="PANTHER" id="PTHR19375">
    <property type="entry name" value="HEAT SHOCK PROTEIN 70KDA"/>
    <property type="match status" value="1"/>
</dbReference>
<dbReference type="Pfam" id="PF00012">
    <property type="entry name" value="HSP70"/>
    <property type="match status" value="2"/>
</dbReference>
<dbReference type="PRINTS" id="PR00301">
    <property type="entry name" value="HEATSHOCK70"/>
</dbReference>
<dbReference type="SUPFAM" id="SSF53067">
    <property type="entry name" value="Actin-like ATPase domain"/>
    <property type="match status" value="2"/>
</dbReference>
<dbReference type="SUPFAM" id="SSF100934">
    <property type="entry name" value="Heat shock protein 70kD (HSP70), C-terminal subdomain"/>
    <property type="match status" value="1"/>
</dbReference>
<dbReference type="SUPFAM" id="SSF100920">
    <property type="entry name" value="Heat shock protein 70kD (HSP70), peptide-binding domain"/>
    <property type="match status" value="1"/>
</dbReference>
<dbReference type="PROSITE" id="PS00297">
    <property type="entry name" value="HSP70_1"/>
    <property type="match status" value="1"/>
</dbReference>
<dbReference type="PROSITE" id="PS00329">
    <property type="entry name" value="HSP70_2"/>
    <property type="match status" value="1"/>
</dbReference>
<dbReference type="PROSITE" id="PS01036">
    <property type="entry name" value="HSP70_3"/>
    <property type="match status" value="1"/>
</dbReference>
<feature type="chain" id="PRO_0000078423" description="Chaperone protein DnaK">
    <location>
        <begin position="1"/>
        <end position="626"/>
    </location>
</feature>
<feature type="region of interest" description="Disordered" evidence="2">
    <location>
        <begin position="586"/>
        <end position="626"/>
    </location>
</feature>
<feature type="compositionally biased region" description="Low complexity" evidence="2">
    <location>
        <begin position="586"/>
        <end position="606"/>
    </location>
</feature>
<feature type="compositionally biased region" description="Acidic residues" evidence="2">
    <location>
        <begin position="607"/>
        <end position="626"/>
    </location>
</feature>
<feature type="modified residue" description="Phosphothreonine; by autocatalysis" evidence="1">
    <location>
        <position position="175"/>
    </location>
</feature>